<comment type="subcellular location">
    <subcellularLocation>
        <location evidence="1">Cell inner membrane</location>
        <topology evidence="1">Single-pass membrane protein</topology>
    </subcellularLocation>
</comment>
<comment type="similarity">
    <text evidence="1">Belongs to the UPF0387 family.</text>
</comment>
<dbReference type="EMBL" id="AL513382">
    <property type="protein sequence ID" value="CAD02541.1"/>
    <property type="molecule type" value="Genomic_DNA"/>
</dbReference>
<dbReference type="EMBL" id="AE014613">
    <property type="protein sequence ID" value="AAO68391.1"/>
    <property type="molecule type" value="Genomic_DNA"/>
</dbReference>
<dbReference type="RefSeq" id="NP_456721.1">
    <property type="nucleotide sequence ID" value="NC_003198.1"/>
</dbReference>
<dbReference type="RefSeq" id="WP_001261696.1">
    <property type="nucleotide sequence ID" value="NZ_WSUR01000002.1"/>
</dbReference>
<dbReference type="STRING" id="220341.gene:17586296"/>
<dbReference type="KEGG" id="stt:t0694"/>
<dbReference type="KEGG" id="sty:STY2391"/>
<dbReference type="PATRIC" id="fig|220341.7.peg.2415"/>
<dbReference type="HOGENOM" id="CLU_220259_0_0_6"/>
<dbReference type="OrthoDB" id="6548946at2"/>
<dbReference type="Proteomes" id="UP000000541">
    <property type="component" value="Chromosome"/>
</dbReference>
<dbReference type="Proteomes" id="UP000002670">
    <property type="component" value="Chromosome"/>
</dbReference>
<dbReference type="GO" id="GO:0005886">
    <property type="term" value="C:plasma membrane"/>
    <property type="evidence" value="ECO:0007669"/>
    <property type="project" value="UniProtKB-SubCell"/>
</dbReference>
<dbReference type="HAMAP" id="MF_01362">
    <property type="entry name" value="UPF0387"/>
    <property type="match status" value="1"/>
</dbReference>
<dbReference type="InterPro" id="IPR020870">
    <property type="entry name" value="UPF0387_membrane"/>
</dbReference>
<dbReference type="NCBIfam" id="NF010225">
    <property type="entry name" value="PRK13681.1"/>
    <property type="match status" value="1"/>
</dbReference>
<name>YOHO_SALTI</name>
<keyword id="KW-0997">Cell inner membrane</keyword>
<keyword id="KW-1003">Cell membrane</keyword>
<keyword id="KW-0472">Membrane</keyword>
<keyword id="KW-0812">Transmembrane</keyword>
<keyword id="KW-1133">Transmembrane helix</keyword>
<evidence type="ECO:0000255" key="1">
    <source>
        <dbReference type="HAMAP-Rule" id="MF_01362"/>
    </source>
</evidence>
<accession>Q8XFT0</accession>
<accession>Q7AMQ4</accession>
<protein>
    <recommendedName>
        <fullName evidence="1">UPF0387 membrane protein YohO</fullName>
    </recommendedName>
</protein>
<reference key="1">
    <citation type="journal article" date="2001" name="Nature">
        <title>Complete genome sequence of a multiple drug resistant Salmonella enterica serovar Typhi CT18.</title>
        <authorList>
            <person name="Parkhill J."/>
            <person name="Dougan G."/>
            <person name="James K.D."/>
            <person name="Thomson N.R."/>
            <person name="Pickard D."/>
            <person name="Wain J."/>
            <person name="Churcher C.M."/>
            <person name="Mungall K.L."/>
            <person name="Bentley S.D."/>
            <person name="Holden M.T.G."/>
            <person name="Sebaihia M."/>
            <person name="Baker S."/>
            <person name="Basham D."/>
            <person name="Brooks K."/>
            <person name="Chillingworth T."/>
            <person name="Connerton P."/>
            <person name="Cronin A."/>
            <person name="Davis P."/>
            <person name="Davies R.M."/>
            <person name="Dowd L."/>
            <person name="White N."/>
            <person name="Farrar J."/>
            <person name="Feltwell T."/>
            <person name="Hamlin N."/>
            <person name="Haque A."/>
            <person name="Hien T.T."/>
            <person name="Holroyd S."/>
            <person name="Jagels K."/>
            <person name="Krogh A."/>
            <person name="Larsen T.S."/>
            <person name="Leather S."/>
            <person name="Moule S."/>
            <person name="O'Gaora P."/>
            <person name="Parry C."/>
            <person name="Quail M.A."/>
            <person name="Rutherford K.M."/>
            <person name="Simmonds M."/>
            <person name="Skelton J."/>
            <person name="Stevens K."/>
            <person name="Whitehead S."/>
            <person name="Barrell B.G."/>
        </authorList>
    </citation>
    <scope>NUCLEOTIDE SEQUENCE [LARGE SCALE GENOMIC DNA]</scope>
    <source>
        <strain>CT18</strain>
    </source>
</reference>
<reference key="2">
    <citation type="journal article" date="2003" name="J. Bacteriol.">
        <title>Comparative genomics of Salmonella enterica serovar Typhi strains Ty2 and CT18.</title>
        <authorList>
            <person name="Deng W."/>
            <person name="Liou S.-R."/>
            <person name="Plunkett G. III"/>
            <person name="Mayhew G.F."/>
            <person name="Rose D.J."/>
            <person name="Burland V."/>
            <person name="Kodoyianni V."/>
            <person name="Schwartz D.C."/>
            <person name="Blattner F.R."/>
        </authorList>
    </citation>
    <scope>NUCLEOTIDE SEQUENCE [LARGE SCALE GENOMIC DNA]</scope>
    <source>
        <strain>ATCC 700931 / Ty2</strain>
    </source>
</reference>
<organism>
    <name type="scientific">Salmonella typhi</name>
    <dbReference type="NCBI Taxonomy" id="90370"/>
    <lineage>
        <taxon>Bacteria</taxon>
        <taxon>Pseudomonadati</taxon>
        <taxon>Pseudomonadota</taxon>
        <taxon>Gammaproteobacteria</taxon>
        <taxon>Enterobacterales</taxon>
        <taxon>Enterobacteriaceae</taxon>
        <taxon>Salmonella</taxon>
    </lineage>
</organism>
<feature type="chain" id="PRO_0000252199" description="UPF0387 membrane protein YohO">
    <location>
        <begin position="1"/>
        <end position="35"/>
    </location>
</feature>
<feature type="transmembrane region" description="Helical" evidence="1">
    <location>
        <begin position="6"/>
        <end position="26"/>
    </location>
</feature>
<proteinExistence type="inferred from homology"/>
<gene>
    <name evidence="1" type="primary">yohO</name>
    <name type="ordered locus">STY2391</name>
    <name type="ordered locus">t0694</name>
</gene>
<sequence length="35" mass="3580">MRVAKIGVIALFLLMAIGGIGGVMLAGYSFILRAG</sequence>